<name>HIS6_MARMS</name>
<protein>
    <recommendedName>
        <fullName evidence="1">Imidazole glycerol phosphate synthase subunit HisF</fullName>
        <ecNumber evidence="1">4.3.2.10</ecNumber>
    </recommendedName>
    <alternativeName>
        <fullName evidence="1">IGP synthase cyclase subunit</fullName>
    </alternativeName>
    <alternativeName>
        <fullName evidence="1">IGP synthase subunit HisF</fullName>
    </alternativeName>
    <alternativeName>
        <fullName evidence="1">ImGP synthase subunit HisF</fullName>
        <shortName evidence="1">IGPS subunit HisF</shortName>
    </alternativeName>
</protein>
<dbReference type="EC" id="4.3.2.10" evidence="1"/>
<dbReference type="EMBL" id="CP000749">
    <property type="protein sequence ID" value="ABR69685.1"/>
    <property type="molecule type" value="Genomic_DNA"/>
</dbReference>
<dbReference type="SMR" id="A6VTA6"/>
<dbReference type="STRING" id="400668.Mmwyl1_0751"/>
<dbReference type="KEGG" id="mmw:Mmwyl1_0751"/>
<dbReference type="eggNOG" id="COG0107">
    <property type="taxonomic scope" value="Bacteria"/>
</dbReference>
<dbReference type="HOGENOM" id="CLU_048577_4_0_6"/>
<dbReference type="OrthoDB" id="9781903at2"/>
<dbReference type="UniPathway" id="UPA00031">
    <property type="reaction ID" value="UER00010"/>
</dbReference>
<dbReference type="GO" id="GO:0005737">
    <property type="term" value="C:cytoplasm"/>
    <property type="evidence" value="ECO:0007669"/>
    <property type="project" value="UniProtKB-SubCell"/>
</dbReference>
<dbReference type="GO" id="GO:0000107">
    <property type="term" value="F:imidazoleglycerol-phosphate synthase activity"/>
    <property type="evidence" value="ECO:0007669"/>
    <property type="project" value="UniProtKB-UniRule"/>
</dbReference>
<dbReference type="GO" id="GO:0016829">
    <property type="term" value="F:lyase activity"/>
    <property type="evidence" value="ECO:0007669"/>
    <property type="project" value="UniProtKB-KW"/>
</dbReference>
<dbReference type="GO" id="GO:0000105">
    <property type="term" value="P:L-histidine biosynthetic process"/>
    <property type="evidence" value="ECO:0007669"/>
    <property type="project" value="UniProtKB-UniRule"/>
</dbReference>
<dbReference type="CDD" id="cd04731">
    <property type="entry name" value="HisF"/>
    <property type="match status" value="1"/>
</dbReference>
<dbReference type="FunFam" id="3.20.20.70:FF:000006">
    <property type="entry name" value="Imidazole glycerol phosphate synthase subunit HisF"/>
    <property type="match status" value="1"/>
</dbReference>
<dbReference type="Gene3D" id="3.20.20.70">
    <property type="entry name" value="Aldolase class I"/>
    <property type="match status" value="1"/>
</dbReference>
<dbReference type="HAMAP" id="MF_01013">
    <property type="entry name" value="HisF"/>
    <property type="match status" value="1"/>
</dbReference>
<dbReference type="InterPro" id="IPR013785">
    <property type="entry name" value="Aldolase_TIM"/>
</dbReference>
<dbReference type="InterPro" id="IPR006062">
    <property type="entry name" value="His_biosynth"/>
</dbReference>
<dbReference type="InterPro" id="IPR004651">
    <property type="entry name" value="HisF"/>
</dbReference>
<dbReference type="InterPro" id="IPR050064">
    <property type="entry name" value="IGPS_HisA/HisF"/>
</dbReference>
<dbReference type="InterPro" id="IPR011060">
    <property type="entry name" value="RibuloseP-bd_barrel"/>
</dbReference>
<dbReference type="NCBIfam" id="TIGR00735">
    <property type="entry name" value="hisF"/>
    <property type="match status" value="1"/>
</dbReference>
<dbReference type="PANTHER" id="PTHR21235:SF2">
    <property type="entry name" value="IMIDAZOLE GLYCEROL PHOSPHATE SYNTHASE HISHF"/>
    <property type="match status" value="1"/>
</dbReference>
<dbReference type="PANTHER" id="PTHR21235">
    <property type="entry name" value="IMIDAZOLE GLYCEROL PHOSPHATE SYNTHASE SUBUNIT HISF/H IGP SYNTHASE SUBUNIT HISF/H"/>
    <property type="match status" value="1"/>
</dbReference>
<dbReference type="Pfam" id="PF00977">
    <property type="entry name" value="His_biosynth"/>
    <property type="match status" value="1"/>
</dbReference>
<dbReference type="SUPFAM" id="SSF51366">
    <property type="entry name" value="Ribulose-phoshate binding barrel"/>
    <property type="match status" value="1"/>
</dbReference>
<accession>A6VTA6</accession>
<gene>
    <name evidence="1" type="primary">hisF</name>
    <name type="ordered locus">Mmwyl1_0751</name>
</gene>
<organism>
    <name type="scientific">Marinomonas sp. (strain MWYL1)</name>
    <dbReference type="NCBI Taxonomy" id="400668"/>
    <lineage>
        <taxon>Bacteria</taxon>
        <taxon>Pseudomonadati</taxon>
        <taxon>Pseudomonadota</taxon>
        <taxon>Gammaproteobacteria</taxon>
        <taxon>Oceanospirillales</taxon>
        <taxon>Oceanospirillaceae</taxon>
        <taxon>Marinomonas</taxon>
    </lineage>
</organism>
<comment type="function">
    <text evidence="1">IGPS catalyzes the conversion of PRFAR and glutamine to IGP, AICAR and glutamate. The HisF subunit catalyzes the cyclization activity that produces IGP and AICAR from PRFAR using the ammonia provided by the HisH subunit.</text>
</comment>
<comment type="catalytic activity">
    <reaction evidence="1">
        <text>5-[(5-phospho-1-deoxy-D-ribulos-1-ylimino)methylamino]-1-(5-phospho-beta-D-ribosyl)imidazole-4-carboxamide + L-glutamine = D-erythro-1-(imidazol-4-yl)glycerol 3-phosphate + 5-amino-1-(5-phospho-beta-D-ribosyl)imidazole-4-carboxamide + L-glutamate + H(+)</text>
        <dbReference type="Rhea" id="RHEA:24793"/>
        <dbReference type="ChEBI" id="CHEBI:15378"/>
        <dbReference type="ChEBI" id="CHEBI:29985"/>
        <dbReference type="ChEBI" id="CHEBI:58278"/>
        <dbReference type="ChEBI" id="CHEBI:58359"/>
        <dbReference type="ChEBI" id="CHEBI:58475"/>
        <dbReference type="ChEBI" id="CHEBI:58525"/>
        <dbReference type="EC" id="4.3.2.10"/>
    </reaction>
</comment>
<comment type="pathway">
    <text evidence="1">Amino-acid biosynthesis; L-histidine biosynthesis; L-histidine from 5-phospho-alpha-D-ribose 1-diphosphate: step 5/9.</text>
</comment>
<comment type="subunit">
    <text evidence="1">Heterodimer of HisH and HisF.</text>
</comment>
<comment type="subcellular location">
    <subcellularLocation>
        <location evidence="1">Cytoplasm</location>
    </subcellularLocation>
</comment>
<comment type="similarity">
    <text evidence="1">Belongs to the HisA/HisF family.</text>
</comment>
<sequence>MGLAKRIIPCLDVDNGRVVKGVQFVDIRDAGDPVEVAKRYNEQGADEITFLDITASSDDRETTVHMVEAIASQVFIPLTVGGGIRTCEDIRRMLNAGADKVGINTAAVFNPEFVREAAQRFGSQCIVVAIDAKKVSAEGEPDKWEIFTHGGRKPTGLDAVEWAKKMVEYGAGEILLTSMDRDGTKNGFDLGVTRAISEAVHVPVIASGGVGNLDHLVDGVIEGKADAVLAASIFHFGEYSIQEAKQRMTDAGIEMRL</sequence>
<proteinExistence type="inferred from homology"/>
<evidence type="ECO:0000255" key="1">
    <source>
        <dbReference type="HAMAP-Rule" id="MF_01013"/>
    </source>
</evidence>
<reference key="1">
    <citation type="submission" date="2007-06" db="EMBL/GenBank/DDBJ databases">
        <title>Complete sequence of Marinomonas sp. MWYL1.</title>
        <authorList>
            <consortium name="US DOE Joint Genome Institute"/>
            <person name="Copeland A."/>
            <person name="Lucas S."/>
            <person name="Lapidus A."/>
            <person name="Barry K."/>
            <person name="Glavina del Rio T."/>
            <person name="Dalin E."/>
            <person name="Tice H."/>
            <person name="Pitluck S."/>
            <person name="Kiss H."/>
            <person name="Brettin T."/>
            <person name="Bruce D."/>
            <person name="Detter J.C."/>
            <person name="Han C."/>
            <person name="Schmutz J."/>
            <person name="Larimer F."/>
            <person name="Land M."/>
            <person name="Hauser L."/>
            <person name="Kyrpides N."/>
            <person name="Kim E."/>
            <person name="Johnston A.W.B."/>
            <person name="Todd J.D."/>
            <person name="Rogers R."/>
            <person name="Wexler M."/>
            <person name="Bond P.L."/>
            <person name="Li Y."/>
            <person name="Richardson P."/>
        </authorList>
    </citation>
    <scope>NUCLEOTIDE SEQUENCE [LARGE SCALE GENOMIC DNA]</scope>
    <source>
        <strain>MWYL1</strain>
    </source>
</reference>
<keyword id="KW-0028">Amino-acid biosynthesis</keyword>
<keyword id="KW-0963">Cytoplasm</keyword>
<keyword id="KW-0368">Histidine biosynthesis</keyword>
<keyword id="KW-0456">Lyase</keyword>
<feature type="chain" id="PRO_1000084064" description="Imidazole glycerol phosphate synthase subunit HisF">
    <location>
        <begin position="1"/>
        <end position="257"/>
    </location>
</feature>
<feature type="active site" evidence="1">
    <location>
        <position position="12"/>
    </location>
</feature>
<feature type="active site" evidence="1">
    <location>
        <position position="131"/>
    </location>
</feature>